<reference key="1">
    <citation type="journal article" date="2001" name="Nature">
        <title>Complete genome sequence of Salmonella enterica serovar Typhimurium LT2.</title>
        <authorList>
            <person name="McClelland M."/>
            <person name="Sanderson K.E."/>
            <person name="Spieth J."/>
            <person name="Clifton S.W."/>
            <person name="Latreille P."/>
            <person name="Courtney L."/>
            <person name="Porwollik S."/>
            <person name="Ali J."/>
            <person name="Dante M."/>
            <person name="Du F."/>
            <person name="Hou S."/>
            <person name="Layman D."/>
            <person name="Leonard S."/>
            <person name="Nguyen C."/>
            <person name="Scott K."/>
            <person name="Holmes A."/>
            <person name="Grewal N."/>
            <person name="Mulvaney E."/>
            <person name="Ryan E."/>
            <person name="Sun H."/>
            <person name="Florea L."/>
            <person name="Miller W."/>
            <person name="Stoneking T."/>
            <person name="Nhan M."/>
            <person name="Waterston R."/>
            <person name="Wilson R.K."/>
        </authorList>
    </citation>
    <scope>NUCLEOTIDE SEQUENCE [LARGE SCALE GENOMIC DNA]</scope>
    <source>
        <strain>LT2 / SGSC1412 / ATCC 700720</strain>
    </source>
</reference>
<sequence length="303" mass="33144">MRLFNWRRQAILHAMPVVKPDQIRTPWREFWRRFRRQHVALVAGGFVLALILVAIFARWLTPYDAENYFDYDSLNNGPSLQHWFGVDSLGRDIFSRVLVGAQISLAAGVFAVFIGAIIGTVLGLLAGYYEGWWDRFIMRICDVLFAFPGILLAIAVVAVLGSGIANVIVAVAIFSIPAFARLVRGNTLVLKQQTFIESARSIGASDTTILFSHILPGTVSSIVVFFTMRIGTSIISAASLSFLGLGAQPPTPEWGAMLNEARADMVIAPHVALFPAVAIFLTVLAFNLLGDGLRDALDPKIKG</sequence>
<accession>Q7CQV4</accession>
<organism>
    <name type="scientific">Salmonella typhimurium (strain LT2 / SGSC1412 / ATCC 700720)</name>
    <dbReference type="NCBI Taxonomy" id="99287"/>
    <lineage>
        <taxon>Bacteria</taxon>
        <taxon>Pseudomonadati</taxon>
        <taxon>Pseudomonadota</taxon>
        <taxon>Gammaproteobacteria</taxon>
        <taxon>Enterobacterales</taxon>
        <taxon>Enterobacteriaceae</taxon>
        <taxon>Salmonella</taxon>
    </lineage>
</organism>
<protein>
    <recommendedName>
        <fullName evidence="1">Glutathione transport system permease protein GsiD</fullName>
    </recommendedName>
</protein>
<comment type="function">
    <text evidence="1">Part of the ABC transporter complex GsiABCD involved in glutathione import. Probably responsible for the translocation of the substrate across the membrane.</text>
</comment>
<comment type="subunit">
    <text evidence="1">The complex is composed of two ATP-binding proteins (GsiA), two transmembrane proteins (GsiC and GsiD) and a solute-binding protein (GsiB).</text>
</comment>
<comment type="subcellular location">
    <subcellularLocation>
        <location evidence="1">Cell inner membrane</location>
        <topology evidence="2">Multi-pass membrane protein</topology>
    </subcellularLocation>
</comment>
<comment type="similarity">
    <text evidence="4">Belongs to the binding-protein-dependent transport system permease family.</text>
</comment>
<keyword id="KW-0997">Cell inner membrane</keyword>
<keyword id="KW-1003">Cell membrane</keyword>
<keyword id="KW-0472">Membrane</keyword>
<keyword id="KW-1185">Reference proteome</keyword>
<keyword id="KW-0812">Transmembrane</keyword>
<keyword id="KW-1133">Transmembrane helix</keyword>
<keyword id="KW-0813">Transport</keyword>
<evidence type="ECO:0000250" key="1">
    <source>
        <dbReference type="UniProtKB" id="P75799"/>
    </source>
</evidence>
<evidence type="ECO:0000255" key="2"/>
<evidence type="ECO:0000255" key="3">
    <source>
        <dbReference type="PROSITE-ProRule" id="PRU00441"/>
    </source>
</evidence>
<evidence type="ECO:0000305" key="4"/>
<feature type="chain" id="PRO_0000280011" description="Glutathione transport system permease protein GsiD">
    <location>
        <begin position="1"/>
        <end position="303"/>
    </location>
</feature>
<feature type="transmembrane region" description="Helical" evidence="3">
    <location>
        <begin position="37"/>
        <end position="57"/>
    </location>
</feature>
<feature type="transmembrane region" description="Helical" evidence="3">
    <location>
        <begin position="105"/>
        <end position="125"/>
    </location>
</feature>
<feature type="transmembrane region" description="Helical" evidence="3">
    <location>
        <begin position="144"/>
        <end position="164"/>
    </location>
</feature>
<feature type="transmembrane region" description="Helical" evidence="3">
    <location>
        <begin position="165"/>
        <end position="185"/>
    </location>
</feature>
<feature type="transmembrane region" description="Helical" evidence="3">
    <location>
        <begin position="208"/>
        <end position="228"/>
    </location>
</feature>
<feature type="transmembrane region" description="Helical" evidence="3">
    <location>
        <begin position="230"/>
        <end position="250"/>
    </location>
</feature>
<feature type="transmembrane region" description="Helical" evidence="3">
    <location>
        <begin position="266"/>
        <end position="286"/>
    </location>
</feature>
<feature type="domain" description="ABC transmembrane type-1" evidence="3">
    <location>
        <begin position="101"/>
        <end position="290"/>
    </location>
</feature>
<dbReference type="EMBL" id="AE006468">
    <property type="protein sequence ID" value="AAL19787.1"/>
    <property type="molecule type" value="Genomic_DNA"/>
</dbReference>
<dbReference type="RefSeq" id="WP_001236024.1">
    <property type="nucleotide sequence ID" value="NC_003197.2"/>
</dbReference>
<dbReference type="SMR" id="Q7CQV4"/>
<dbReference type="STRING" id="99287.STM0851"/>
<dbReference type="PaxDb" id="99287-STM0851"/>
<dbReference type="KEGG" id="stm:STM0851"/>
<dbReference type="PATRIC" id="fig|99287.12.peg.888"/>
<dbReference type="HOGENOM" id="CLU_028518_5_3_6"/>
<dbReference type="OMA" id="IAWTRFK"/>
<dbReference type="PhylomeDB" id="Q7CQV4"/>
<dbReference type="BioCyc" id="SENT99287:STM0851-MONOMER"/>
<dbReference type="Proteomes" id="UP000001014">
    <property type="component" value="Chromosome"/>
</dbReference>
<dbReference type="GO" id="GO:0005886">
    <property type="term" value="C:plasma membrane"/>
    <property type="evidence" value="ECO:0000318"/>
    <property type="project" value="GO_Central"/>
</dbReference>
<dbReference type="GO" id="GO:0071916">
    <property type="term" value="F:dipeptide transmembrane transporter activity"/>
    <property type="evidence" value="ECO:0000318"/>
    <property type="project" value="GO_Central"/>
</dbReference>
<dbReference type="CDD" id="cd06261">
    <property type="entry name" value="TM_PBP2"/>
    <property type="match status" value="1"/>
</dbReference>
<dbReference type="FunFam" id="1.10.3720.10:FF:000022">
    <property type="entry name" value="Glutathione ABC transporter permease GsiD"/>
    <property type="match status" value="1"/>
</dbReference>
<dbReference type="Gene3D" id="1.10.3720.10">
    <property type="entry name" value="MetI-like"/>
    <property type="match status" value="1"/>
</dbReference>
<dbReference type="InterPro" id="IPR050366">
    <property type="entry name" value="BP-dependent_transpt_permease"/>
</dbReference>
<dbReference type="InterPro" id="IPR000515">
    <property type="entry name" value="MetI-like"/>
</dbReference>
<dbReference type="InterPro" id="IPR035906">
    <property type="entry name" value="MetI-like_sf"/>
</dbReference>
<dbReference type="InterPro" id="IPR025966">
    <property type="entry name" value="OppC_N"/>
</dbReference>
<dbReference type="NCBIfam" id="NF011662">
    <property type="entry name" value="PRK15082.1"/>
    <property type="match status" value="1"/>
</dbReference>
<dbReference type="PANTHER" id="PTHR43386:SF3">
    <property type="entry name" value="GLUTATHIONE TRANSPORT SYSTEM PERMEASE PROTEIN GSID"/>
    <property type="match status" value="1"/>
</dbReference>
<dbReference type="PANTHER" id="PTHR43386">
    <property type="entry name" value="OLIGOPEPTIDE TRANSPORT SYSTEM PERMEASE PROTEIN APPC"/>
    <property type="match status" value="1"/>
</dbReference>
<dbReference type="Pfam" id="PF00528">
    <property type="entry name" value="BPD_transp_1"/>
    <property type="match status" value="1"/>
</dbReference>
<dbReference type="Pfam" id="PF12911">
    <property type="entry name" value="OppC_N"/>
    <property type="match status" value="1"/>
</dbReference>
<dbReference type="SUPFAM" id="SSF161098">
    <property type="entry name" value="MetI-like"/>
    <property type="match status" value="1"/>
</dbReference>
<dbReference type="PROSITE" id="PS50928">
    <property type="entry name" value="ABC_TM1"/>
    <property type="match status" value="1"/>
</dbReference>
<gene>
    <name evidence="1" type="primary">gsiD</name>
    <name type="ordered locus">STM0851</name>
</gene>
<proteinExistence type="inferred from homology"/>
<name>GSID_SALTY</name>